<organism>
    <name type="scientific">Candida albicans</name>
    <name type="common">Yeast</name>
    <dbReference type="NCBI Taxonomy" id="5476"/>
    <lineage>
        <taxon>Eukaryota</taxon>
        <taxon>Fungi</taxon>
        <taxon>Dikarya</taxon>
        <taxon>Ascomycota</taxon>
        <taxon>Saccharomycotina</taxon>
        <taxon>Pichiomycetes</taxon>
        <taxon>Debaryomycetaceae</taxon>
        <taxon>Candida/Lodderomyces clade</taxon>
        <taxon>Candida</taxon>
    </lineage>
</organism>
<protein>
    <recommendedName>
        <fullName>DNA topoisomerase 1</fullName>
        <ecNumber evidence="3">5.6.2.1</ecNumber>
    </recommendedName>
    <alternativeName>
        <fullName>DNA topoisomerase I</fullName>
    </alternativeName>
</protein>
<feature type="chain" id="PRO_0000145208" description="DNA topoisomerase 1">
    <location>
        <begin position="1"/>
        <end position="778"/>
    </location>
</feature>
<feature type="domain" description="Topo IB-type catalytic" evidence="2">
    <location>
        <begin position="374"/>
        <end position="778"/>
    </location>
</feature>
<feature type="region of interest" description="Disordered" evidence="4">
    <location>
        <begin position="1"/>
        <end position="141"/>
    </location>
</feature>
<feature type="region of interest" description="Interaction with DNA" evidence="1">
    <location>
        <begin position="367"/>
        <end position="368"/>
    </location>
</feature>
<feature type="region of interest" description="Interaction with DNA" evidence="1">
    <location>
        <begin position="430"/>
        <end position="435"/>
    </location>
</feature>
<feature type="region of interest" description="Interaction with DNA" evidence="1">
    <location>
        <begin position="522"/>
        <end position="524"/>
    </location>
</feature>
<feature type="compositionally biased region" description="Low complexity" evidence="4">
    <location>
        <begin position="17"/>
        <end position="26"/>
    </location>
</feature>
<feature type="compositionally biased region" description="Basic and acidic residues" evidence="4">
    <location>
        <begin position="71"/>
        <end position="83"/>
    </location>
</feature>
<feature type="compositionally biased region" description="Basic and acidic residues" evidence="4">
    <location>
        <begin position="100"/>
        <end position="121"/>
    </location>
</feature>
<feature type="compositionally biased region" description="Polar residues" evidence="4">
    <location>
        <begin position="122"/>
        <end position="131"/>
    </location>
</feature>
<feature type="active site" description="O-(3'-phospho-DNA)-tyrosine intermediate" evidence="2">
    <location>
        <position position="736"/>
    </location>
</feature>
<feature type="site" description="Interaction with DNA" evidence="1">
    <location>
        <position position="306"/>
    </location>
</feature>
<feature type="site" description="Interaction with DNA" evidence="1">
    <location>
        <position position="354"/>
    </location>
</feature>
<feature type="site" description="Interaction with DNA" evidence="1">
    <location>
        <position position="385"/>
    </location>
</feature>
<feature type="site" description="Interaction with DNA" evidence="1">
    <location>
        <position position="442"/>
    </location>
</feature>
<feature type="site" description="Interaction with DNA" evidence="1">
    <location>
        <position position="468"/>
    </location>
</feature>
<feature type="site" description="Interaction with DNA" evidence="1">
    <location>
        <position position="511"/>
    </location>
</feature>
<feature type="site" description="Interaction with DNA" evidence="1">
    <location>
        <position position="568"/>
    </location>
</feature>
<feature type="site" description="Interaction with DNA" evidence="1">
    <location>
        <position position="586"/>
    </location>
</feature>
<feature type="sequence conflict" description="In Ref. 2; AAB39507." evidence="5" ref="2">
    <original>N</original>
    <variation>S</variation>
    <location>
        <position position="2"/>
    </location>
</feature>
<feature type="sequence conflict" description="In Ref. 2." evidence="5" ref="2">
    <original>K</original>
    <variation>KRK</variation>
    <location>
        <position position="61"/>
    </location>
</feature>
<feature type="sequence conflict" description="In Ref. 2; AAB39507." evidence="5" ref="2">
    <original>L</original>
    <variation>F</variation>
    <location>
        <position position="465"/>
    </location>
</feature>
<feature type="sequence conflict" description="In Ref. 2; AAB39507." evidence="5" ref="2">
    <original>I</original>
    <variation>L</variation>
    <location>
        <position position="623"/>
    </location>
</feature>
<feature type="sequence conflict" description="In Ref. 2; AAB39507." evidence="5" ref="2">
    <original>R</original>
    <variation>K</variation>
    <location>
        <position position="710"/>
    </location>
</feature>
<name>TOP1_CANAX</name>
<evidence type="ECO:0000250" key="1"/>
<evidence type="ECO:0000255" key="2">
    <source>
        <dbReference type="PROSITE-ProRule" id="PRU01382"/>
    </source>
</evidence>
<evidence type="ECO:0000255" key="3">
    <source>
        <dbReference type="PROSITE-ProRule" id="PRU10130"/>
    </source>
</evidence>
<evidence type="ECO:0000256" key="4">
    <source>
        <dbReference type="SAM" id="MobiDB-lite"/>
    </source>
</evidence>
<evidence type="ECO:0000305" key="5"/>
<dbReference type="EC" id="5.6.2.1" evidence="3"/>
<dbReference type="EMBL" id="U40454">
    <property type="protein sequence ID" value="AAC49381.1"/>
    <property type="molecule type" value="Genomic_DNA"/>
</dbReference>
<dbReference type="EMBL" id="U41342">
    <property type="protein sequence ID" value="AAB39507.1"/>
    <property type="molecule type" value="Genomic_DNA"/>
</dbReference>
<dbReference type="SMR" id="Q00313"/>
<dbReference type="VEuPathDB" id="FungiDB:C6_00950C_A"/>
<dbReference type="VEuPathDB" id="FungiDB:CAWG_05264"/>
<dbReference type="PHI-base" id="PHI:80"/>
<dbReference type="GO" id="GO:0000785">
    <property type="term" value="C:chromatin"/>
    <property type="evidence" value="ECO:0007669"/>
    <property type="project" value="EnsemblFungi"/>
</dbReference>
<dbReference type="GO" id="GO:0005829">
    <property type="term" value="C:cytosol"/>
    <property type="evidence" value="ECO:0007669"/>
    <property type="project" value="EnsemblFungi"/>
</dbReference>
<dbReference type="GO" id="GO:0005730">
    <property type="term" value="C:nucleolus"/>
    <property type="evidence" value="ECO:0007669"/>
    <property type="project" value="EnsemblFungi"/>
</dbReference>
<dbReference type="GO" id="GO:0003677">
    <property type="term" value="F:DNA binding"/>
    <property type="evidence" value="ECO:0007669"/>
    <property type="project" value="UniProtKB-KW"/>
</dbReference>
<dbReference type="GO" id="GO:0003917">
    <property type="term" value="F:DNA topoisomerase type I (single strand cut, ATP-independent) activity"/>
    <property type="evidence" value="ECO:0007669"/>
    <property type="project" value="UniProtKB-EC"/>
</dbReference>
<dbReference type="GO" id="GO:0006271">
    <property type="term" value="P:DNA strand elongation involved in DNA replication"/>
    <property type="evidence" value="ECO:0007669"/>
    <property type="project" value="EnsemblFungi"/>
</dbReference>
<dbReference type="GO" id="GO:0006265">
    <property type="term" value="P:DNA topological change"/>
    <property type="evidence" value="ECO:0007669"/>
    <property type="project" value="EnsemblFungi"/>
</dbReference>
<dbReference type="GO" id="GO:0007076">
    <property type="term" value="P:mitotic chromosome condensation"/>
    <property type="evidence" value="ECO:0007669"/>
    <property type="project" value="EnsemblFungi"/>
</dbReference>
<dbReference type="GO" id="GO:0007097">
    <property type="term" value="P:nuclear migration"/>
    <property type="evidence" value="ECO:0007669"/>
    <property type="project" value="EnsemblFungi"/>
</dbReference>
<dbReference type="GO" id="GO:0000183">
    <property type="term" value="P:rDNA heterochromatin formation"/>
    <property type="evidence" value="ECO:0007669"/>
    <property type="project" value="EnsemblFungi"/>
</dbReference>
<dbReference type="GO" id="GO:0000019">
    <property type="term" value="P:regulation of mitotic recombination"/>
    <property type="evidence" value="ECO:0007669"/>
    <property type="project" value="EnsemblFungi"/>
</dbReference>
<dbReference type="GO" id="GO:0006357">
    <property type="term" value="P:regulation of transcription by RNA polymerase II"/>
    <property type="evidence" value="ECO:0007669"/>
    <property type="project" value="EnsemblFungi"/>
</dbReference>
<dbReference type="GO" id="GO:0009303">
    <property type="term" value="P:rRNA transcription"/>
    <property type="evidence" value="ECO:0007669"/>
    <property type="project" value="EnsemblFungi"/>
</dbReference>
<dbReference type="GO" id="GO:0006368">
    <property type="term" value="P:transcription elongation by RNA polymerase II"/>
    <property type="evidence" value="ECO:0007669"/>
    <property type="project" value="EnsemblFungi"/>
</dbReference>
<dbReference type="CDD" id="cd00659">
    <property type="entry name" value="Topo_IB_C"/>
    <property type="match status" value="1"/>
</dbReference>
<dbReference type="CDD" id="cd03488">
    <property type="entry name" value="Topoisomer_IB_N_htopoI_like"/>
    <property type="match status" value="1"/>
</dbReference>
<dbReference type="FunFam" id="1.10.10.41:FF:000001">
    <property type="entry name" value="DNA topoisomerase I"/>
    <property type="match status" value="1"/>
</dbReference>
<dbReference type="FunFam" id="1.10.132.10:FF:000003">
    <property type="entry name" value="DNA topoisomerase I"/>
    <property type="match status" value="1"/>
</dbReference>
<dbReference type="FunFam" id="2.170.11.10:FF:000001">
    <property type="entry name" value="DNA topoisomerase I"/>
    <property type="match status" value="1"/>
</dbReference>
<dbReference type="FunFam" id="3.90.15.10:FF:000002">
    <property type="entry name" value="DNA topoisomerase I"/>
    <property type="match status" value="1"/>
</dbReference>
<dbReference type="Gene3D" id="1.10.132.10">
    <property type="match status" value="1"/>
</dbReference>
<dbReference type="Gene3D" id="2.170.11.10">
    <property type="entry name" value="DNA Topoisomerase I, domain 2"/>
    <property type="match status" value="1"/>
</dbReference>
<dbReference type="Gene3D" id="3.90.15.10">
    <property type="entry name" value="Topoisomerase I, Chain A, domain 3"/>
    <property type="match status" value="1"/>
</dbReference>
<dbReference type="Gene3D" id="1.10.10.41">
    <property type="entry name" value="Yeast DNA topoisomerase - domain 1"/>
    <property type="match status" value="1"/>
</dbReference>
<dbReference type="InterPro" id="IPR011010">
    <property type="entry name" value="DNA_brk_join_enz"/>
</dbReference>
<dbReference type="InterPro" id="IPR013034">
    <property type="entry name" value="DNA_topo_DNA_db_N_dom1"/>
</dbReference>
<dbReference type="InterPro" id="IPR013030">
    <property type="entry name" value="DNA_topo_DNA_db_N_dom2"/>
</dbReference>
<dbReference type="InterPro" id="IPR001631">
    <property type="entry name" value="TopoI"/>
</dbReference>
<dbReference type="InterPro" id="IPR025834">
    <property type="entry name" value="TopoI_C_dom"/>
</dbReference>
<dbReference type="InterPro" id="IPR014711">
    <property type="entry name" value="TopoI_cat_a-hlx-sub_euk"/>
</dbReference>
<dbReference type="InterPro" id="IPR014727">
    <property type="entry name" value="TopoI_cat_a/b-sub_euk"/>
</dbReference>
<dbReference type="InterPro" id="IPR013500">
    <property type="entry name" value="TopoI_cat_euk"/>
</dbReference>
<dbReference type="InterPro" id="IPR008336">
    <property type="entry name" value="TopoI_DNA-bd_euk"/>
</dbReference>
<dbReference type="InterPro" id="IPR036202">
    <property type="entry name" value="TopoI_DNA-bd_euk_N_sf"/>
</dbReference>
<dbReference type="InterPro" id="IPR013499">
    <property type="entry name" value="TopoI_euk"/>
</dbReference>
<dbReference type="InterPro" id="IPR018521">
    <property type="entry name" value="TopoIB_AS"/>
</dbReference>
<dbReference type="InterPro" id="IPR048045">
    <property type="entry name" value="Topoisomer_I_DNA-bd"/>
</dbReference>
<dbReference type="InterPro" id="IPR051062">
    <property type="entry name" value="Topoisomerase_IB"/>
</dbReference>
<dbReference type="PANTHER" id="PTHR10290:SF3">
    <property type="entry name" value="DNA TOPOISOMERASE 1"/>
    <property type="match status" value="1"/>
</dbReference>
<dbReference type="PANTHER" id="PTHR10290">
    <property type="entry name" value="DNA TOPOISOMERASE I"/>
    <property type="match status" value="1"/>
</dbReference>
<dbReference type="Pfam" id="PF14370">
    <property type="entry name" value="Topo_C_assoc"/>
    <property type="match status" value="1"/>
</dbReference>
<dbReference type="Pfam" id="PF01028">
    <property type="entry name" value="Topoisom_I"/>
    <property type="match status" value="1"/>
</dbReference>
<dbReference type="Pfam" id="PF02919">
    <property type="entry name" value="Topoisom_I_N"/>
    <property type="match status" value="1"/>
</dbReference>
<dbReference type="PRINTS" id="PR00416">
    <property type="entry name" value="EUTPISMRASEI"/>
</dbReference>
<dbReference type="SMART" id="SM00435">
    <property type="entry name" value="TOPEUc"/>
    <property type="match status" value="1"/>
</dbReference>
<dbReference type="SUPFAM" id="SSF56349">
    <property type="entry name" value="DNA breaking-rejoining enzymes"/>
    <property type="match status" value="1"/>
</dbReference>
<dbReference type="SUPFAM" id="SSF56741">
    <property type="entry name" value="Eukaryotic DNA topoisomerase I, N-terminal DNA-binding fragment"/>
    <property type="match status" value="1"/>
</dbReference>
<dbReference type="PROSITE" id="PS00176">
    <property type="entry name" value="TOPO_IB_1"/>
    <property type="match status" value="1"/>
</dbReference>
<dbReference type="PROSITE" id="PS52038">
    <property type="entry name" value="TOPO_IB_2"/>
    <property type="match status" value="1"/>
</dbReference>
<reference key="1">
    <citation type="journal article" date="1996" name="FEMS Microbiol. Lett.">
        <title>Identification of the gene encoding DNA topoisomerase I from Candida albicans.</title>
        <authorList>
            <person name="Taylor A."/>
            <person name="Giles K."/>
            <person name="Sarthy A.V."/>
            <person name="McGonigal T."/>
            <person name="Fostel J."/>
        </authorList>
    </citation>
    <scope>NUCLEOTIDE SEQUENCE [GENOMIC DNA]</scope>
    <source>
        <strain>ATCC 10231 / CBS 6431 / CIP 48.72 / DSM 1386 / NBRC 1594</strain>
    </source>
</reference>
<reference key="2">
    <citation type="journal article" date="1997" name="Microbiology">
        <title>The topoisomerase I gene from Candida albicans.</title>
        <authorList>
            <person name="Jiang W."/>
            <person name="Gerhold D."/>
            <person name="Kmiec E.B."/>
            <person name="Hauser M."/>
            <person name="Becker J.M."/>
            <person name="Koltin Y."/>
        </authorList>
    </citation>
    <scope>NUCLEOTIDE SEQUENCE [GENOMIC DNA]</scope>
</reference>
<proteinExistence type="inferred from homology"/>
<accession>Q00313</accession>
<accession>P78593</accession>
<sequence length="778" mass="90484">MNSSDEEDIALSRLAKKSSSITSASTYEDDEDDDIPLAKKSRKKRVESDYEEDEDEVPLKKLSNGRAKKQVKTETKVKKEPKSANKSKSTSKKDTKVKKEKTTVKKESKATSTKVKEESKTQSDSQASVKSETPEEDQGYKWWEVNQEEEGDGYIKWQTLEHNGVMFPPPYEPLPSHVKLYYNNKPVNLPPEAEEVAGFYGAMLETDHAKNPVFQKNFFNDFLEVLKECGGCGVEIKKFEKLDFSKMYAHFEKLREEKKAMSREEKKRIKEEKEKEEEPYRTCYLNGRKELVGNFRIEPPGLFRGRGAHPKTGKLKRRVVSEQVTLNLGKDAKIPEPPAGHQWGEIRHDNEVTWLAMWKENISDSLKYVRFANNSSVKGQSDFKKFETARKLRDHVDSIRKDYTKMLKSEKMQDRQMATAMYLIDVFALRAGGEKGEDEADTVGCCSLRYEHVTLKPPNKVIFDLLGKDSIRFYQEVEVDKQVFKNLRIFKKSPKQPGDDLFDRINPSLVNRQLQNYMKGLTAKVFRTYNASKTMQDQIDIIENEGTVAEKVAKFNAANRTVAILCNHQRTVSKTHGDSVQRINDKLKKFMWQKIRLKKMILQLEPKLKKKDSKYFEEIDDLIKEDIEHIHHTIIKRQREQAKKKLERDNEKLKLEGKPLLTESDIKDKLDKIDELEKEYQKELKTGKPIVTKNATVEKLKQQIETLENRILNVSIQLKDKEDNSEVSLGTSKMNYIDPRLIVMFSKKFDVPIEKLFTKTLREKFIWAIESADENWRF</sequence>
<gene>
    <name type="primary">TOP1</name>
</gene>
<keyword id="KW-0238">DNA-binding</keyword>
<keyword id="KW-0413">Isomerase</keyword>
<keyword id="KW-0799">Topoisomerase</keyword>
<comment type="function">
    <text evidence="1">Releases the supercoiling and torsional tension of DNA introduced during the DNA replication and transcription by transiently cleaving and rejoining one strand of the DNA duplex. Introduces a single-strand break via transesterification at a target site in duplex DNA. The scissile phosphodiester is attacked by the catalytic tyrosine of the enzyme, resulting in the formation of a DNA-(3'-phosphotyrosyl)-enzyme intermediate and the expulsion of a 5'-OH DNA strand. The free DNA strand then rotates around the intact phosphodiester bond on the opposing strand, thus removing DNA supercoils. Finally, in the religation step, the DNA 5'-OH attacks the covalent intermediate to expel the active-site tyrosine and restore the DNA phosphodiester backbone (By similarity).</text>
</comment>
<comment type="catalytic activity">
    <reaction evidence="3">
        <text>ATP-independent breakage of single-stranded DNA, followed by passage and rejoining.</text>
        <dbReference type="EC" id="5.6.2.1"/>
    </reaction>
</comment>
<comment type="miscellaneous">
    <text>Eukaryotic topoisomerase I and II can relax both negative and positive supercoils, whereas prokaryotic enzymes relax only negative supercoils.</text>
</comment>
<comment type="similarity">
    <text evidence="5">Belongs to the type IB topoisomerase family.</text>
</comment>